<accession>P37892</accession>
<keyword id="KW-0121">Carboxypeptidase</keyword>
<keyword id="KW-0968">Cytoplasmic vesicle</keyword>
<keyword id="KW-0325">Glycoprotein</keyword>
<keyword id="KW-0378">Hydrolase</keyword>
<keyword id="KW-0472">Membrane</keyword>
<keyword id="KW-0479">Metal-binding</keyword>
<keyword id="KW-0482">Metalloprotease</keyword>
<keyword id="KW-0645">Protease</keyword>
<keyword id="KW-0964">Secreted</keyword>
<keyword id="KW-0732">Signal</keyword>
<keyword id="KW-0862">Zinc</keyword>
<gene>
    <name type="primary">cpe</name>
</gene>
<feature type="signal peptide" evidence="3">
    <location>
        <begin position="1"/>
        <end position="20"/>
    </location>
</feature>
<feature type="chain" id="PRO_0000004390" description="Carboxypeptidase E">
    <location>
        <begin position="21"/>
        <end position="454"/>
    </location>
</feature>
<feature type="domain" description="Peptidase M14" evidence="4">
    <location>
        <begin position="30"/>
        <end position="350"/>
    </location>
</feature>
<feature type="active site" description="Proton donor/acceptor" evidence="4">
    <location>
        <position position="320"/>
    </location>
</feature>
<feature type="binding site" evidence="4">
    <location>
        <position position="92"/>
    </location>
    <ligand>
        <name>Zn(2+)</name>
        <dbReference type="ChEBI" id="CHEBI:29105"/>
        <note>catalytic</note>
    </ligand>
</feature>
<feature type="binding site" evidence="4">
    <location>
        <position position="95"/>
    </location>
    <ligand>
        <name>Zn(2+)</name>
        <dbReference type="ChEBI" id="CHEBI:29105"/>
        <note>catalytic</note>
    </ligand>
</feature>
<feature type="binding site" evidence="4">
    <location>
        <position position="226"/>
    </location>
    <ligand>
        <name>Zn(2+)</name>
        <dbReference type="ChEBI" id="CHEBI:29105"/>
        <note>catalytic</note>
    </ligand>
</feature>
<feature type="glycosylation site" description="N-linked (GlcNAc...) asparagine" evidence="3">
    <location>
        <position position="117"/>
    </location>
</feature>
<feature type="glycosylation site" description="N-linked (GlcNAc...) asparagine" evidence="3">
    <location>
        <position position="368"/>
    </location>
</feature>
<protein>
    <recommendedName>
        <fullName>Carboxypeptidase E</fullName>
        <shortName>CPE</shortName>
        <ecNumber>3.4.17.10</ecNumber>
    </recommendedName>
    <alternativeName>
        <fullName>Carboxypeptidase H</fullName>
        <shortName>CPH</shortName>
    </alternativeName>
    <alternativeName>
        <fullName>Enkephalin convertase</fullName>
    </alternativeName>
    <alternativeName>
        <fullName>Prohormone-processing carboxypeptidase</fullName>
    </alternativeName>
</protein>
<evidence type="ECO:0000250" key="1">
    <source>
        <dbReference type="UniProtKB" id="P00730"/>
    </source>
</evidence>
<evidence type="ECO:0000250" key="2">
    <source>
        <dbReference type="UniProtKB" id="P15087"/>
    </source>
</evidence>
<evidence type="ECO:0000255" key="3"/>
<evidence type="ECO:0000255" key="4">
    <source>
        <dbReference type="PROSITE-ProRule" id="PRU01379"/>
    </source>
</evidence>
<evidence type="ECO:0000305" key="5"/>
<name>CBPE_LOPAM</name>
<sequence>MKQICSIVLLGAAVVSLVSAAGSDSEISFEYHRYEELRKALVSVWLQCPTIARIYTIGESFEGRELLVLEMSDNPGTHEPGEPEFKYIANMHGNEAVGRELLIYLAQYLCNQYQQGNETIIDLIHSTRIHLMPSMNPDGFEKAASQPGEIKDWFVGRSNAQGVDLNRNFPDLDRIIYTNEREGGANNHLLQNMKKAVDENTKLAPETKAVIHWIMEIPFVLSANLHGGDVVANYPYDETRTGSTHEYSASPDDVIFKSLAKAFSIYNPVMSDPQRPPCRKHDDDSSFKDGITNGGAWYSVPGGMQDFNYLSSNCFEITLELSCDKFPNEDTLKTYWEQNRNSLVNYIEQVHRGVKGYVRDLQGNPIFNATISVEGIDHDITTAKDGDYWRLLRQGNYKVAASAPGYLTVIKKVAVPHSPATRVDFELESLMERKEEEREELMDWWKMMSETLNF</sequence>
<comment type="function">
    <text>Removes residual C-terminal Arg or Lys remaining after initial endoprotease cleavage during prohormone processing.</text>
</comment>
<comment type="catalytic activity">
    <reaction>
        <text>Release of C-terminal arginine or lysine residues from polypeptides.</text>
        <dbReference type="EC" id="3.4.17.10"/>
    </reaction>
</comment>
<comment type="cofactor">
    <cofactor evidence="1">
        <name>Zn(2+)</name>
        <dbReference type="ChEBI" id="CHEBI:29105"/>
    </cofactor>
    <text evidence="1">Binds 1 zinc ion per subunit.</text>
</comment>
<comment type="subcellular location">
    <subcellularLocation>
        <location evidence="2">Cytoplasmic vesicle</location>
        <location evidence="2">Secretory vesicle membrane</location>
        <topology evidence="2">Peripheral membrane protein</topology>
    </subcellularLocation>
    <subcellularLocation>
        <location evidence="2">Secreted</location>
    </subcellularLocation>
    <text evidence="2">Associated with the secretory granule membrane through direct binding to lipid rafts in intragranular conditions.</text>
</comment>
<comment type="tissue specificity">
    <text>Expressed in brain, pituitary and islet organs, but not in other tissues which do not secrete peptide hormones.</text>
</comment>
<comment type="similarity">
    <text evidence="5">Belongs to the peptidase M14 family.</text>
</comment>
<dbReference type="EC" id="3.4.17.10"/>
<dbReference type="EMBL" id="U01909">
    <property type="protein sequence ID" value="AAC59636.1"/>
    <property type="molecule type" value="mRNA"/>
</dbReference>
<dbReference type="EMBL" id="S80565">
    <property type="protein sequence ID" value="AAA03252.1"/>
    <property type="molecule type" value="mRNA"/>
</dbReference>
<dbReference type="PIR" id="A54324">
    <property type="entry name" value="A54324"/>
</dbReference>
<dbReference type="SMR" id="P37892"/>
<dbReference type="MEROPS" id="M14.005"/>
<dbReference type="GlyCosmos" id="P37892">
    <property type="glycosylation" value="2 sites, No reported glycans"/>
</dbReference>
<dbReference type="GO" id="GO:0005615">
    <property type="term" value="C:extracellular space"/>
    <property type="evidence" value="ECO:0007669"/>
    <property type="project" value="TreeGrafter"/>
</dbReference>
<dbReference type="GO" id="GO:0030658">
    <property type="term" value="C:transport vesicle membrane"/>
    <property type="evidence" value="ECO:0007669"/>
    <property type="project" value="UniProtKB-SubCell"/>
</dbReference>
<dbReference type="GO" id="GO:0004181">
    <property type="term" value="F:metallocarboxypeptidase activity"/>
    <property type="evidence" value="ECO:0007669"/>
    <property type="project" value="UniProtKB-EC"/>
</dbReference>
<dbReference type="GO" id="GO:0008270">
    <property type="term" value="F:zinc ion binding"/>
    <property type="evidence" value="ECO:0007669"/>
    <property type="project" value="InterPro"/>
</dbReference>
<dbReference type="GO" id="GO:0006518">
    <property type="term" value="P:peptide metabolic process"/>
    <property type="evidence" value="ECO:0007669"/>
    <property type="project" value="TreeGrafter"/>
</dbReference>
<dbReference type="GO" id="GO:0016485">
    <property type="term" value="P:protein processing"/>
    <property type="evidence" value="ECO:0007669"/>
    <property type="project" value="TreeGrafter"/>
</dbReference>
<dbReference type="CDD" id="cd03865">
    <property type="entry name" value="M14_CPE"/>
    <property type="match status" value="1"/>
</dbReference>
<dbReference type="CDD" id="cd11308">
    <property type="entry name" value="Peptidase_M14NE-CP-C_like"/>
    <property type="match status" value="1"/>
</dbReference>
<dbReference type="FunFam" id="2.60.40.1120:FF:000004">
    <property type="entry name" value="Carboxypeptidase E"/>
    <property type="match status" value="1"/>
</dbReference>
<dbReference type="FunFam" id="3.40.630.10:FF:000013">
    <property type="entry name" value="carboxypeptidase N catalytic chain"/>
    <property type="match status" value="1"/>
</dbReference>
<dbReference type="Gene3D" id="2.60.40.1120">
    <property type="entry name" value="Carboxypeptidase-like, regulatory domain"/>
    <property type="match status" value="1"/>
</dbReference>
<dbReference type="Gene3D" id="3.40.630.10">
    <property type="entry name" value="Zn peptidases"/>
    <property type="match status" value="1"/>
</dbReference>
<dbReference type="InterPro" id="IPR008969">
    <property type="entry name" value="CarboxyPept-like_regulatory"/>
</dbReference>
<dbReference type="InterPro" id="IPR034232">
    <property type="entry name" value="M14_CPE_CPD"/>
</dbReference>
<dbReference type="InterPro" id="IPR000834">
    <property type="entry name" value="Peptidase_M14"/>
</dbReference>
<dbReference type="InterPro" id="IPR050753">
    <property type="entry name" value="Peptidase_M14_domain"/>
</dbReference>
<dbReference type="PANTHER" id="PTHR11532:SF92">
    <property type="entry name" value="CARBOXYPEPTIDASE E"/>
    <property type="match status" value="1"/>
</dbReference>
<dbReference type="PANTHER" id="PTHR11532">
    <property type="entry name" value="PROTEASE M14 CARBOXYPEPTIDASE"/>
    <property type="match status" value="1"/>
</dbReference>
<dbReference type="Pfam" id="PF13620">
    <property type="entry name" value="CarboxypepD_reg"/>
    <property type="match status" value="1"/>
</dbReference>
<dbReference type="Pfam" id="PF00246">
    <property type="entry name" value="Peptidase_M14"/>
    <property type="match status" value="1"/>
</dbReference>
<dbReference type="PRINTS" id="PR00765">
    <property type="entry name" value="CRBOXYPTASEA"/>
</dbReference>
<dbReference type="SMART" id="SM00631">
    <property type="entry name" value="Zn_pept"/>
    <property type="match status" value="1"/>
</dbReference>
<dbReference type="SUPFAM" id="SSF49464">
    <property type="entry name" value="Carboxypeptidase regulatory domain-like"/>
    <property type="match status" value="1"/>
</dbReference>
<dbReference type="SUPFAM" id="SSF53187">
    <property type="entry name" value="Zn-dependent exopeptidases"/>
    <property type="match status" value="1"/>
</dbReference>
<dbReference type="PROSITE" id="PS00132">
    <property type="entry name" value="CARBOXYPEPT_ZN_1"/>
    <property type="match status" value="1"/>
</dbReference>
<dbReference type="PROSITE" id="PS00133">
    <property type="entry name" value="CARBOXYPEPT_ZN_2"/>
    <property type="match status" value="1"/>
</dbReference>
<dbReference type="PROSITE" id="PS52035">
    <property type="entry name" value="PEPTIDASE_M14"/>
    <property type="match status" value="1"/>
</dbReference>
<organism>
    <name type="scientific">Lophius americanus</name>
    <name type="common">American angler</name>
    <name type="synonym">Anglerfish</name>
    <dbReference type="NCBI Taxonomy" id="8073"/>
    <lineage>
        <taxon>Eukaryota</taxon>
        <taxon>Metazoa</taxon>
        <taxon>Chordata</taxon>
        <taxon>Craniata</taxon>
        <taxon>Vertebrata</taxon>
        <taxon>Euteleostomi</taxon>
        <taxon>Actinopterygii</taxon>
        <taxon>Neopterygii</taxon>
        <taxon>Teleostei</taxon>
        <taxon>Neoteleostei</taxon>
        <taxon>Acanthomorphata</taxon>
        <taxon>Eupercaria</taxon>
        <taxon>Lophiiformes</taxon>
        <taxon>Lophiidae</taxon>
        <taxon>Lophius</taxon>
    </lineage>
</organism>
<proteinExistence type="evidence at transcript level"/>
<reference key="1">
    <citation type="journal article" date="1991" name="Mol. Cell. Endocrinol.">
        <title>Primary structure and tissue distribution of anglerfish carboxypeptidase H.</title>
        <authorList>
            <person name="Roth W.W."/>
            <person name="Mackin R.B."/>
            <person name="Spiess J."/>
            <person name="Goodman R.H."/>
            <person name="Noe B.D."/>
        </authorList>
    </citation>
    <scope>NUCLEOTIDE SEQUENCE [MRNA]</scope>
    <source>
        <tissue>Pancreatic islet</tissue>
    </source>
</reference>